<evidence type="ECO:0000255" key="1">
    <source>
        <dbReference type="HAMAP-Rule" id="MF_00514"/>
    </source>
</evidence>
<evidence type="ECO:0000305" key="2"/>
<keyword id="KW-1185">Reference proteome</keyword>
<keyword id="KW-0687">Ribonucleoprotein</keyword>
<keyword id="KW-0689">Ribosomal protein</keyword>
<dbReference type="EMBL" id="AE009951">
    <property type="protein sequence ID" value="AAL94530.1"/>
    <property type="molecule type" value="Genomic_DNA"/>
</dbReference>
<dbReference type="RefSeq" id="NP_603231.1">
    <property type="nucleotide sequence ID" value="NC_003454.1"/>
</dbReference>
<dbReference type="RefSeq" id="WP_005893833.1">
    <property type="nucleotide sequence ID" value="NZ_OZ209243.1"/>
</dbReference>
<dbReference type="SMR" id="Q8RGH1"/>
<dbReference type="FunCoup" id="Q8RGH1">
    <property type="interactions" value="268"/>
</dbReference>
<dbReference type="STRING" id="190304.FN0326"/>
<dbReference type="PaxDb" id="190304-FN0326"/>
<dbReference type="EnsemblBacteria" id="AAL94530">
    <property type="protein sequence ID" value="AAL94530"/>
    <property type="gene ID" value="FN0326"/>
</dbReference>
<dbReference type="GeneID" id="93326995"/>
<dbReference type="KEGG" id="fnu:FN0326"/>
<dbReference type="PATRIC" id="fig|190304.8.peg.904"/>
<dbReference type="eggNOG" id="COG0291">
    <property type="taxonomic scope" value="Bacteria"/>
</dbReference>
<dbReference type="HOGENOM" id="CLU_169643_2_2_0"/>
<dbReference type="InParanoid" id="Q8RGH1"/>
<dbReference type="BioCyc" id="FNUC190304:G1FZS-923-MONOMER"/>
<dbReference type="Proteomes" id="UP000002521">
    <property type="component" value="Chromosome"/>
</dbReference>
<dbReference type="GO" id="GO:0022625">
    <property type="term" value="C:cytosolic large ribosomal subunit"/>
    <property type="evidence" value="ECO:0000318"/>
    <property type="project" value="GO_Central"/>
</dbReference>
<dbReference type="GO" id="GO:0003735">
    <property type="term" value="F:structural constituent of ribosome"/>
    <property type="evidence" value="ECO:0000318"/>
    <property type="project" value="GO_Central"/>
</dbReference>
<dbReference type="GO" id="GO:0006412">
    <property type="term" value="P:translation"/>
    <property type="evidence" value="ECO:0007669"/>
    <property type="project" value="UniProtKB-UniRule"/>
</dbReference>
<dbReference type="FunFam" id="4.10.410.60:FF:000001">
    <property type="entry name" value="50S ribosomal protein L35"/>
    <property type="match status" value="1"/>
</dbReference>
<dbReference type="Gene3D" id="4.10.410.60">
    <property type="match status" value="1"/>
</dbReference>
<dbReference type="HAMAP" id="MF_00514">
    <property type="entry name" value="Ribosomal_bL35"/>
    <property type="match status" value="1"/>
</dbReference>
<dbReference type="InterPro" id="IPR001706">
    <property type="entry name" value="Ribosomal_bL35"/>
</dbReference>
<dbReference type="InterPro" id="IPR021137">
    <property type="entry name" value="Ribosomal_bL35-like"/>
</dbReference>
<dbReference type="InterPro" id="IPR018265">
    <property type="entry name" value="Ribosomal_bL35_CS"/>
</dbReference>
<dbReference type="InterPro" id="IPR037229">
    <property type="entry name" value="Ribosomal_bL35_sf"/>
</dbReference>
<dbReference type="NCBIfam" id="TIGR00001">
    <property type="entry name" value="rpmI_bact"/>
    <property type="match status" value="1"/>
</dbReference>
<dbReference type="PANTHER" id="PTHR33343">
    <property type="entry name" value="54S RIBOSOMAL PROTEIN BL35M"/>
    <property type="match status" value="1"/>
</dbReference>
<dbReference type="PANTHER" id="PTHR33343:SF1">
    <property type="entry name" value="LARGE RIBOSOMAL SUBUNIT PROTEIN BL35M"/>
    <property type="match status" value="1"/>
</dbReference>
<dbReference type="Pfam" id="PF01632">
    <property type="entry name" value="Ribosomal_L35p"/>
    <property type="match status" value="1"/>
</dbReference>
<dbReference type="PRINTS" id="PR00064">
    <property type="entry name" value="RIBOSOMALL35"/>
</dbReference>
<dbReference type="SUPFAM" id="SSF143034">
    <property type="entry name" value="L35p-like"/>
    <property type="match status" value="1"/>
</dbReference>
<dbReference type="PROSITE" id="PS00936">
    <property type="entry name" value="RIBOSOMAL_L35"/>
    <property type="match status" value="1"/>
</dbReference>
<comment type="similarity">
    <text evidence="1">Belongs to the bacterial ribosomal protein bL35 family.</text>
</comment>
<sequence>MPKMKTHRGAKKRIKVTGTGKFVIKHSGKSHILTKKDRKRKNHLKKDAVVTETYKRHMQGLLPYGEGR</sequence>
<reference key="1">
    <citation type="journal article" date="2002" name="J. Bacteriol.">
        <title>Genome sequence and analysis of the oral bacterium Fusobacterium nucleatum strain ATCC 25586.</title>
        <authorList>
            <person name="Kapatral V."/>
            <person name="Anderson I."/>
            <person name="Ivanova N."/>
            <person name="Reznik G."/>
            <person name="Los T."/>
            <person name="Lykidis A."/>
            <person name="Bhattacharyya A."/>
            <person name="Bartman A."/>
            <person name="Gardner W."/>
            <person name="Grechkin G."/>
            <person name="Zhu L."/>
            <person name="Vasieva O."/>
            <person name="Chu L."/>
            <person name="Kogan Y."/>
            <person name="Chaga O."/>
            <person name="Goltsman E."/>
            <person name="Bernal A."/>
            <person name="Larsen N."/>
            <person name="D'Souza M."/>
            <person name="Walunas T."/>
            <person name="Pusch G."/>
            <person name="Haselkorn R."/>
            <person name="Fonstein M."/>
            <person name="Kyrpides N.C."/>
            <person name="Overbeek R."/>
        </authorList>
    </citation>
    <scope>NUCLEOTIDE SEQUENCE [LARGE SCALE GENOMIC DNA]</scope>
    <source>
        <strain>ATCC 25586 / DSM 15643 / BCRC 10681 / CIP 101130 / JCM 8532 / KCTC 2640 / LMG 13131 / VPI 4355</strain>
    </source>
</reference>
<proteinExistence type="inferred from homology"/>
<gene>
    <name evidence="1" type="primary">rpmI</name>
    <name type="ordered locus">FN0326</name>
</gene>
<accession>Q8RGH1</accession>
<organism>
    <name type="scientific">Fusobacterium nucleatum subsp. nucleatum (strain ATCC 25586 / DSM 15643 / BCRC 10681 / CIP 101130 / JCM 8532 / KCTC 2640 / LMG 13131 / VPI 4355)</name>
    <dbReference type="NCBI Taxonomy" id="190304"/>
    <lineage>
        <taxon>Bacteria</taxon>
        <taxon>Fusobacteriati</taxon>
        <taxon>Fusobacteriota</taxon>
        <taxon>Fusobacteriia</taxon>
        <taxon>Fusobacteriales</taxon>
        <taxon>Fusobacteriaceae</taxon>
        <taxon>Fusobacterium</taxon>
    </lineage>
</organism>
<name>RL35_FUSNN</name>
<feature type="chain" id="PRO_0000177362" description="Large ribosomal subunit protein bL35">
    <location>
        <begin position="1"/>
        <end position="68"/>
    </location>
</feature>
<protein>
    <recommendedName>
        <fullName evidence="1">Large ribosomal subunit protein bL35</fullName>
    </recommendedName>
    <alternativeName>
        <fullName evidence="2">50S ribosomal protein L35</fullName>
    </alternativeName>
</protein>